<evidence type="ECO:0000255" key="1">
    <source>
        <dbReference type="HAMAP-Rule" id="MF_03029"/>
    </source>
</evidence>
<evidence type="ECO:0000256" key="2">
    <source>
        <dbReference type="SAM" id="MobiDB-lite"/>
    </source>
</evidence>
<reference key="1">
    <citation type="journal article" date="2005" name="Science">
        <title>The genome of the basidiomycetous yeast and human pathogen Cryptococcus neoformans.</title>
        <authorList>
            <person name="Loftus B.J."/>
            <person name="Fung E."/>
            <person name="Roncaglia P."/>
            <person name="Rowley D."/>
            <person name="Amedeo P."/>
            <person name="Bruno D."/>
            <person name="Vamathevan J."/>
            <person name="Miranda M."/>
            <person name="Anderson I.J."/>
            <person name="Fraser J.A."/>
            <person name="Allen J.E."/>
            <person name="Bosdet I.E."/>
            <person name="Brent M.R."/>
            <person name="Chiu R."/>
            <person name="Doering T.L."/>
            <person name="Donlin M.J."/>
            <person name="D'Souza C.A."/>
            <person name="Fox D.S."/>
            <person name="Grinberg V."/>
            <person name="Fu J."/>
            <person name="Fukushima M."/>
            <person name="Haas B.J."/>
            <person name="Huang J.C."/>
            <person name="Janbon G."/>
            <person name="Jones S.J.M."/>
            <person name="Koo H.L."/>
            <person name="Krzywinski M.I."/>
            <person name="Kwon-Chung K.J."/>
            <person name="Lengeler K.B."/>
            <person name="Maiti R."/>
            <person name="Marra M.A."/>
            <person name="Marra R.E."/>
            <person name="Mathewson C.A."/>
            <person name="Mitchell T.G."/>
            <person name="Pertea M."/>
            <person name="Riggs F.R."/>
            <person name="Salzberg S.L."/>
            <person name="Schein J.E."/>
            <person name="Shvartsbeyn A."/>
            <person name="Shin H."/>
            <person name="Shumway M."/>
            <person name="Specht C.A."/>
            <person name="Suh B.B."/>
            <person name="Tenney A."/>
            <person name="Utterback T.R."/>
            <person name="Wickes B.L."/>
            <person name="Wortman J.R."/>
            <person name="Wye N.H."/>
            <person name="Kronstad J.W."/>
            <person name="Lodge J.K."/>
            <person name="Heitman J."/>
            <person name="Davis R.W."/>
            <person name="Fraser C.M."/>
            <person name="Hyman R.W."/>
        </authorList>
    </citation>
    <scope>NUCLEOTIDE SEQUENCE [LARGE SCALE GENOMIC DNA]</scope>
    <source>
        <strain>JEC21 / ATCC MYA-565</strain>
    </source>
</reference>
<gene>
    <name evidence="1" type="primary">YTM1</name>
    <name type="ordered locus">CNN00480</name>
</gene>
<name>YTM1_CRYNJ</name>
<organism>
    <name type="scientific">Cryptococcus neoformans var. neoformans serotype D (strain JEC21 / ATCC MYA-565)</name>
    <name type="common">Filobasidiella neoformans</name>
    <dbReference type="NCBI Taxonomy" id="214684"/>
    <lineage>
        <taxon>Eukaryota</taxon>
        <taxon>Fungi</taxon>
        <taxon>Dikarya</taxon>
        <taxon>Basidiomycota</taxon>
        <taxon>Agaricomycotina</taxon>
        <taxon>Tremellomycetes</taxon>
        <taxon>Tremellales</taxon>
        <taxon>Cryptococcaceae</taxon>
        <taxon>Cryptococcus</taxon>
        <taxon>Cryptococcus neoformans species complex</taxon>
    </lineage>
</organism>
<protein>
    <recommendedName>
        <fullName evidence="1">Ribosome biogenesis protein YTM1</fullName>
    </recommendedName>
</protein>
<keyword id="KW-0539">Nucleus</keyword>
<keyword id="KW-1185">Reference proteome</keyword>
<keyword id="KW-0677">Repeat</keyword>
<keyword id="KW-0690">Ribosome biogenesis</keyword>
<keyword id="KW-0698">rRNA processing</keyword>
<keyword id="KW-0853">WD repeat</keyword>
<comment type="function">
    <text evidence="1">Component of the NOP7 complex, which is required for maturation of the 25S and 5.8S ribosomal RNAs and formation of the 60S ribosome.</text>
</comment>
<comment type="subunit">
    <text evidence="1">Component of the NOP7 complex, composed of ERB1, NOP7 and YTM1. The complex is held together by ERB1, which interacts with NOP7 via its N-terminal domain and with YTM1 via a high-affinity interaction between the seven-bladed beta-propeller domains of the 2 proteins. The NOP7 complex associates with the 66S pre-ribosome. Interacts (via UBL domain) with MDN1 (via VWFA/MIDAS domain).</text>
</comment>
<comment type="subcellular location">
    <subcellularLocation>
        <location evidence="1">Nucleus</location>
        <location evidence="1">Nucleolus</location>
    </subcellularLocation>
    <subcellularLocation>
        <location evidence="1">Nucleus</location>
        <location evidence="1">Nucleoplasm</location>
    </subcellularLocation>
</comment>
<comment type="similarity">
    <text evidence="1">Belongs to the WD repeat WDR12/YTM1 family.</text>
</comment>
<feature type="chain" id="PRO_0000369586" description="Ribosome biogenesis protein YTM1">
    <location>
        <begin position="1"/>
        <end position="486"/>
    </location>
</feature>
<feature type="repeat" description="WD 1">
    <location>
        <begin position="212"/>
        <end position="251"/>
    </location>
</feature>
<feature type="repeat" description="WD 2">
    <location>
        <begin position="305"/>
        <end position="345"/>
    </location>
</feature>
<feature type="repeat" description="WD 3">
    <location>
        <begin position="349"/>
        <end position="388"/>
    </location>
</feature>
<feature type="repeat" description="WD 4">
    <location>
        <begin position="392"/>
        <end position="432"/>
    </location>
</feature>
<feature type="repeat" description="WD 5">
    <location>
        <begin position="454"/>
        <end position="486"/>
    </location>
</feature>
<feature type="region of interest" description="Ubiquitin-like (UBL) domain" evidence="1">
    <location>
        <begin position="12"/>
        <end position="99"/>
    </location>
</feature>
<feature type="region of interest" description="Disordered" evidence="2">
    <location>
        <begin position="249"/>
        <end position="299"/>
    </location>
</feature>
<accession>P0CS54</accession>
<accession>Q55HS5</accession>
<accession>Q5K7B0</accession>
<sequence>MSIDPAGSQASRQLPINLFTRSPTDAIPQSTYFIPSAWRRFQLSELINQVLGNTAENGSKPVPFDFLVNGEVLRGSLEAWVKKNRGGDEESQIDVEYVRSVMPPEEAARVEVEDWVSGLSLSRKGYVLLSSYLSHLQVLPLSAAAQSSSALYTLPLPTSLGATSCTWVSPQTQETDILVAAGGVDRQTHVYSIPSLSPDTADAPRELYTLHGHTGPISSVIASSSGKEIVTGSWDGNINLYVLPDAEPTEHQVPADPVSYLPGQGTKKRRKLEKDQEKAPIEGLTDGDATGEGGWRRAPDAVMRGHTGRVGGLVWDKLDSGKIWSAGWDGSVRGWEVETGAAGALRQGPFDKSALCVDQWKMNGTLATGNMDRTICLWDTRQATSLISLTLPTTSPVPSVTCHPTSPFTLASATYSGVVQIWDIRSPKTALFTVSKAQSKLADPNRKVTKNGKVLGERLLAVDWNGEVLVAGGEDGEVGIWRARGE</sequence>
<dbReference type="EMBL" id="AE017356">
    <property type="protein sequence ID" value="AAW47063.1"/>
    <property type="molecule type" value="Genomic_DNA"/>
</dbReference>
<dbReference type="RefSeq" id="XP_568580.1">
    <property type="nucleotide sequence ID" value="XM_568580.1"/>
</dbReference>
<dbReference type="SMR" id="P0CS54"/>
<dbReference type="FunCoup" id="P0CS54">
    <property type="interactions" value="407"/>
</dbReference>
<dbReference type="STRING" id="214684.P0CS54"/>
<dbReference type="PaxDb" id="214684-P0CS54"/>
<dbReference type="EnsemblFungi" id="AAW47063">
    <property type="protein sequence ID" value="AAW47063"/>
    <property type="gene ID" value="CNN00480"/>
</dbReference>
<dbReference type="GeneID" id="3255515"/>
<dbReference type="KEGG" id="cne:CNN00480"/>
<dbReference type="VEuPathDB" id="FungiDB:CNN00480"/>
<dbReference type="eggNOG" id="KOG0313">
    <property type="taxonomic scope" value="Eukaryota"/>
</dbReference>
<dbReference type="HOGENOM" id="CLU_000288_57_0_1"/>
<dbReference type="InParanoid" id="P0CS54"/>
<dbReference type="OMA" id="DHKYVEF"/>
<dbReference type="OrthoDB" id="10251381at2759"/>
<dbReference type="Proteomes" id="UP000002149">
    <property type="component" value="Chromosome 14"/>
</dbReference>
<dbReference type="GO" id="GO:0005730">
    <property type="term" value="C:nucleolus"/>
    <property type="evidence" value="ECO:0007669"/>
    <property type="project" value="UniProtKB-SubCell"/>
</dbReference>
<dbReference type="GO" id="GO:0005654">
    <property type="term" value="C:nucleoplasm"/>
    <property type="evidence" value="ECO:0007669"/>
    <property type="project" value="UniProtKB-SubCell"/>
</dbReference>
<dbReference type="GO" id="GO:0030687">
    <property type="term" value="C:preribosome, large subunit precursor"/>
    <property type="evidence" value="ECO:0007669"/>
    <property type="project" value="UniProtKB-UniRule"/>
</dbReference>
<dbReference type="GO" id="GO:0043021">
    <property type="term" value="F:ribonucleoprotein complex binding"/>
    <property type="evidence" value="ECO:0007669"/>
    <property type="project" value="UniProtKB-UniRule"/>
</dbReference>
<dbReference type="GO" id="GO:0000466">
    <property type="term" value="P:maturation of 5.8S rRNA from tricistronic rRNA transcript (SSU-rRNA, 5.8S rRNA, LSU-rRNA)"/>
    <property type="evidence" value="ECO:0007669"/>
    <property type="project" value="UniProtKB-UniRule"/>
</dbReference>
<dbReference type="GO" id="GO:0000463">
    <property type="term" value="P:maturation of LSU-rRNA from tricistronic rRNA transcript (SSU-rRNA, 5.8S rRNA, LSU-rRNA)"/>
    <property type="evidence" value="ECO:0007669"/>
    <property type="project" value="UniProtKB-UniRule"/>
</dbReference>
<dbReference type="FunFam" id="2.130.10.10:FF:001095">
    <property type="entry name" value="Ribosome biogenesis protein YTM1"/>
    <property type="match status" value="1"/>
</dbReference>
<dbReference type="Gene3D" id="2.130.10.10">
    <property type="entry name" value="YVTN repeat-like/Quinoprotein amine dehydrogenase"/>
    <property type="match status" value="1"/>
</dbReference>
<dbReference type="HAMAP" id="MF_03029">
    <property type="entry name" value="WDR12"/>
    <property type="match status" value="1"/>
</dbReference>
<dbReference type="InterPro" id="IPR012972">
    <property type="entry name" value="NLE"/>
</dbReference>
<dbReference type="InterPro" id="IPR015943">
    <property type="entry name" value="WD40/YVTN_repeat-like_dom_sf"/>
</dbReference>
<dbReference type="InterPro" id="IPR019775">
    <property type="entry name" value="WD40_repeat_CS"/>
</dbReference>
<dbReference type="InterPro" id="IPR036322">
    <property type="entry name" value="WD40_repeat_dom_sf"/>
</dbReference>
<dbReference type="InterPro" id="IPR001680">
    <property type="entry name" value="WD40_rpt"/>
</dbReference>
<dbReference type="InterPro" id="IPR028599">
    <property type="entry name" value="WDR12/Ytm1"/>
</dbReference>
<dbReference type="PANTHER" id="PTHR19855:SF11">
    <property type="entry name" value="RIBOSOME BIOGENESIS PROTEIN WDR12"/>
    <property type="match status" value="1"/>
</dbReference>
<dbReference type="PANTHER" id="PTHR19855">
    <property type="entry name" value="WD40 REPEAT PROTEIN 12, 37"/>
    <property type="match status" value="1"/>
</dbReference>
<dbReference type="Pfam" id="PF08154">
    <property type="entry name" value="NLE"/>
    <property type="match status" value="1"/>
</dbReference>
<dbReference type="Pfam" id="PF00400">
    <property type="entry name" value="WD40"/>
    <property type="match status" value="3"/>
</dbReference>
<dbReference type="SMART" id="SM00320">
    <property type="entry name" value="WD40"/>
    <property type="match status" value="5"/>
</dbReference>
<dbReference type="SUPFAM" id="SSF50978">
    <property type="entry name" value="WD40 repeat-like"/>
    <property type="match status" value="1"/>
</dbReference>
<dbReference type="PROSITE" id="PS00678">
    <property type="entry name" value="WD_REPEATS_1"/>
    <property type="match status" value="2"/>
</dbReference>
<dbReference type="PROSITE" id="PS50082">
    <property type="entry name" value="WD_REPEATS_2"/>
    <property type="match status" value="4"/>
</dbReference>
<dbReference type="PROSITE" id="PS50294">
    <property type="entry name" value="WD_REPEATS_REGION"/>
    <property type="match status" value="2"/>
</dbReference>
<proteinExistence type="inferred from homology"/>